<gene>
    <name evidence="1" type="primary">groEL</name>
    <name evidence="1" type="synonym">groL</name>
</gene>
<dbReference type="EC" id="5.6.1.7" evidence="1"/>
<dbReference type="EMBL" id="AF378196">
    <property type="protein sequence ID" value="AAM46146.1"/>
    <property type="molecule type" value="Genomic_DNA"/>
</dbReference>
<dbReference type="RefSeq" id="WP_006269990.1">
    <property type="nucleotide sequence ID" value="NZ_CAUTAL010000018.1"/>
</dbReference>
<dbReference type="SMR" id="Q8KJ18"/>
<dbReference type="STRING" id="862969.SCI_1689"/>
<dbReference type="GeneID" id="93847724"/>
<dbReference type="eggNOG" id="COG0459">
    <property type="taxonomic scope" value="Bacteria"/>
</dbReference>
<dbReference type="OrthoDB" id="9766614at2"/>
<dbReference type="GO" id="GO:0005737">
    <property type="term" value="C:cytoplasm"/>
    <property type="evidence" value="ECO:0007669"/>
    <property type="project" value="UniProtKB-SubCell"/>
</dbReference>
<dbReference type="GO" id="GO:0005524">
    <property type="term" value="F:ATP binding"/>
    <property type="evidence" value="ECO:0007669"/>
    <property type="project" value="UniProtKB-UniRule"/>
</dbReference>
<dbReference type="GO" id="GO:0140662">
    <property type="term" value="F:ATP-dependent protein folding chaperone"/>
    <property type="evidence" value="ECO:0007669"/>
    <property type="project" value="InterPro"/>
</dbReference>
<dbReference type="GO" id="GO:0016853">
    <property type="term" value="F:isomerase activity"/>
    <property type="evidence" value="ECO:0007669"/>
    <property type="project" value="UniProtKB-KW"/>
</dbReference>
<dbReference type="GO" id="GO:0051082">
    <property type="term" value="F:unfolded protein binding"/>
    <property type="evidence" value="ECO:0007669"/>
    <property type="project" value="UniProtKB-UniRule"/>
</dbReference>
<dbReference type="GO" id="GO:0042026">
    <property type="term" value="P:protein refolding"/>
    <property type="evidence" value="ECO:0007669"/>
    <property type="project" value="UniProtKB-UniRule"/>
</dbReference>
<dbReference type="CDD" id="cd03344">
    <property type="entry name" value="GroEL"/>
    <property type="match status" value="1"/>
</dbReference>
<dbReference type="FunFam" id="1.10.560.10:FF:000001">
    <property type="entry name" value="60 kDa chaperonin"/>
    <property type="match status" value="1"/>
</dbReference>
<dbReference type="FunFam" id="3.50.7.10:FF:000001">
    <property type="entry name" value="60 kDa chaperonin"/>
    <property type="match status" value="1"/>
</dbReference>
<dbReference type="Gene3D" id="3.50.7.10">
    <property type="entry name" value="GroEL"/>
    <property type="match status" value="1"/>
</dbReference>
<dbReference type="Gene3D" id="1.10.560.10">
    <property type="entry name" value="GroEL-like equatorial domain"/>
    <property type="match status" value="1"/>
</dbReference>
<dbReference type="Gene3D" id="3.30.260.10">
    <property type="entry name" value="TCP-1-like chaperonin intermediate domain"/>
    <property type="match status" value="1"/>
</dbReference>
<dbReference type="HAMAP" id="MF_00600">
    <property type="entry name" value="CH60"/>
    <property type="match status" value="1"/>
</dbReference>
<dbReference type="InterPro" id="IPR018370">
    <property type="entry name" value="Chaperonin_Cpn60_CS"/>
</dbReference>
<dbReference type="InterPro" id="IPR001844">
    <property type="entry name" value="Cpn60/GroEL"/>
</dbReference>
<dbReference type="InterPro" id="IPR002423">
    <property type="entry name" value="Cpn60/GroEL/TCP-1"/>
</dbReference>
<dbReference type="InterPro" id="IPR027409">
    <property type="entry name" value="GroEL-like_apical_dom_sf"/>
</dbReference>
<dbReference type="InterPro" id="IPR027413">
    <property type="entry name" value="GROEL-like_equatorial_sf"/>
</dbReference>
<dbReference type="InterPro" id="IPR027410">
    <property type="entry name" value="TCP-1-like_intermed_sf"/>
</dbReference>
<dbReference type="NCBIfam" id="TIGR02348">
    <property type="entry name" value="GroEL"/>
    <property type="match status" value="1"/>
</dbReference>
<dbReference type="NCBIfam" id="NF000592">
    <property type="entry name" value="PRK00013.1"/>
    <property type="match status" value="1"/>
</dbReference>
<dbReference type="NCBIfam" id="NF009487">
    <property type="entry name" value="PRK12849.1"/>
    <property type="match status" value="1"/>
</dbReference>
<dbReference type="NCBIfam" id="NF009488">
    <property type="entry name" value="PRK12850.1"/>
    <property type="match status" value="1"/>
</dbReference>
<dbReference type="NCBIfam" id="NF009489">
    <property type="entry name" value="PRK12851.1"/>
    <property type="match status" value="1"/>
</dbReference>
<dbReference type="PANTHER" id="PTHR45633">
    <property type="entry name" value="60 KDA HEAT SHOCK PROTEIN, MITOCHONDRIAL"/>
    <property type="match status" value="1"/>
</dbReference>
<dbReference type="Pfam" id="PF00118">
    <property type="entry name" value="Cpn60_TCP1"/>
    <property type="match status" value="1"/>
</dbReference>
<dbReference type="PRINTS" id="PR00298">
    <property type="entry name" value="CHAPERONIN60"/>
</dbReference>
<dbReference type="SUPFAM" id="SSF52029">
    <property type="entry name" value="GroEL apical domain-like"/>
    <property type="match status" value="1"/>
</dbReference>
<dbReference type="SUPFAM" id="SSF48592">
    <property type="entry name" value="GroEL equatorial domain-like"/>
    <property type="match status" value="1"/>
</dbReference>
<dbReference type="SUPFAM" id="SSF54849">
    <property type="entry name" value="GroEL-intermediate domain like"/>
    <property type="match status" value="1"/>
</dbReference>
<dbReference type="PROSITE" id="PS00296">
    <property type="entry name" value="CHAPERONINS_CPN60"/>
    <property type="match status" value="1"/>
</dbReference>
<proteinExistence type="inferred from homology"/>
<feature type="chain" id="PRO_0000063551" description="Chaperonin GroEL">
    <location>
        <begin position="1"/>
        <end position="540"/>
    </location>
</feature>
<feature type="binding site" evidence="1">
    <location>
        <begin position="29"/>
        <end position="32"/>
    </location>
    <ligand>
        <name>ATP</name>
        <dbReference type="ChEBI" id="CHEBI:30616"/>
    </ligand>
</feature>
<feature type="binding site" evidence="1">
    <location>
        <begin position="86"/>
        <end position="90"/>
    </location>
    <ligand>
        <name>ATP</name>
        <dbReference type="ChEBI" id="CHEBI:30616"/>
    </ligand>
</feature>
<feature type="binding site" evidence="1">
    <location>
        <position position="413"/>
    </location>
    <ligand>
        <name>ATP</name>
        <dbReference type="ChEBI" id="CHEBI:30616"/>
    </ligand>
</feature>
<feature type="binding site" evidence="1">
    <location>
        <begin position="476"/>
        <end position="478"/>
    </location>
    <ligand>
        <name>ATP</name>
        <dbReference type="ChEBI" id="CHEBI:30616"/>
    </ligand>
</feature>
<feature type="binding site" evidence="1">
    <location>
        <position position="492"/>
    </location>
    <ligand>
        <name>ATP</name>
        <dbReference type="ChEBI" id="CHEBI:30616"/>
    </ligand>
</feature>
<evidence type="ECO:0000255" key="1">
    <source>
        <dbReference type="HAMAP-Rule" id="MF_00600"/>
    </source>
</evidence>
<comment type="function">
    <text evidence="1">Together with its co-chaperonin GroES, plays an essential role in assisting protein folding. The GroEL-GroES system forms a nano-cage that allows encapsulation of the non-native substrate proteins and provides a physical environment optimized to promote and accelerate protein folding.</text>
</comment>
<comment type="catalytic activity">
    <reaction evidence="1">
        <text>ATP + H2O + a folded polypeptide = ADP + phosphate + an unfolded polypeptide.</text>
        <dbReference type="EC" id="5.6.1.7"/>
    </reaction>
</comment>
<comment type="subunit">
    <text evidence="1">Forms a cylinder of 14 subunits composed of two heptameric rings stacked back-to-back. Interacts with the co-chaperonin GroES.</text>
</comment>
<comment type="subcellular location">
    <subcellularLocation>
        <location evidence="1">Cytoplasm</location>
    </subcellularLocation>
</comment>
<comment type="similarity">
    <text evidence="1">Belongs to the chaperonin (HSP60) family.</text>
</comment>
<protein>
    <recommendedName>
        <fullName evidence="1">Chaperonin GroEL</fullName>
        <ecNumber evidence="1">5.6.1.7</ecNumber>
    </recommendedName>
    <alternativeName>
        <fullName evidence="1">60 kDa chaperonin</fullName>
    </alternativeName>
    <alternativeName>
        <fullName evidence="1">Chaperonin-60</fullName>
        <shortName evidence="1">Cpn60</shortName>
    </alternativeName>
</protein>
<organism>
    <name type="scientific">Streptococcus constellatus</name>
    <dbReference type="NCBI Taxonomy" id="76860"/>
    <lineage>
        <taxon>Bacteria</taxon>
        <taxon>Bacillati</taxon>
        <taxon>Bacillota</taxon>
        <taxon>Bacilli</taxon>
        <taxon>Lactobacillales</taxon>
        <taxon>Streptococcaceae</taxon>
        <taxon>Streptococcus</taxon>
        <taxon>Streptococcus anginosus group</taxon>
    </lineage>
</organism>
<name>CH60_STRCV</name>
<accession>Q8KJ18</accession>
<reference key="1">
    <citation type="journal article" date="2002" name="J. Clin. Microbiol.">
        <title>groESL sequence determination, phylogenetic analysis, and species differentiation for viridans group streptococci.</title>
        <authorList>
            <person name="Teng L.-J."/>
            <person name="Hsueh P.R."/>
            <person name="Tsai J.C."/>
            <person name="Chen P.-W."/>
            <person name="Hsu J.-C."/>
            <person name="Lai H.C."/>
            <person name="Lee C.N."/>
            <person name="Ho S.W."/>
        </authorList>
    </citation>
    <scope>NUCLEOTIDE SEQUENCE [GENOMIC DNA]</scope>
</reference>
<keyword id="KW-0067">ATP-binding</keyword>
<keyword id="KW-0143">Chaperone</keyword>
<keyword id="KW-0963">Cytoplasm</keyword>
<keyword id="KW-0413">Isomerase</keyword>
<keyword id="KW-0547">Nucleotide-binding</keyword>
<sequence>MAKDIKFSADARSAMVRGVDILADTVKVTLGPKGRNVVLEKSFGSPLITNDGVTIAKEIELEDHFENMGAKLVSEVASKTNDIAGDGTTTATVLTQAIVREGIKNVTAGANPIGIRRGIETAVATAVEALKANSVPVSNKEAIAQVAAVSSRSEKVGEYISEAMEKVGNDGVITIEESKGMETELDVVEGMQFDRGYLSQYMVTDNEKMVADLDNPYILITDKKISNIQEILPLLENILKTSRPLLIIADDVDGEALPTLVLNKIRGTFNVVAVKAPGFGDRRKAMLEDIAILTGGTVITEDLGLELKDATIEALGQASKVTVDKDSTVIVEGSGAAEAIANRVAVIKSQIESATSEFDKEKLQERLAKLSGGVAVIKVGAATETELKEMKLRIEDALNATRAAVEEGIVSGGGTAFVNVLNTVEALDLSGDEATGRNIVLRALEEPIRQIAINAGFEGSIVIDRLKNSEVGTGFNAATGEWVDMIEAGIIDPVKVTRSALQNAASVASLILTTEAVVASQPEPASPAPAMDPSMMGGMM</sequence>